<keyword id="KW-0488">Methylation</keyword>
<keyword id="KW-0687">Ribonucleoprotein</keyword>
<keyword id="KW-0689">Ribosomal protein</keyword>
<keyword id="KW-0694">RNA-binding</keyword>
<keyword id="KW-0699">rRNA-binding</keyword>
<organism>
    <name type="scientific">Mannheimia succiniciproducens (strain KCTC 0769BP / MBEL55E)</name>
    <dbReference type="NCBI Taxonomy" id="221988"/>
    <lineage>
        <taxon>Bacteria</taxon>
        <taxon>Pseudomonadati</taxon>
        <taxon>Pseudomonadota</taxon>
        <taxon>Gammaproteobacteria</taxon>
        <taxon>Pasteurellales</taxon>
        <taxon>Pasteurellaceae</taxon>
        <taxon>Basfia</taxon>
    </lineage>
</organism>
<evidence type="ECO:0000255" key="1">
    <source>
        <dbReference type="HAMAP-Rule" id="MF_00736"/>
    </source>
</evidence>
<evidence type="ECO:0000305" key="2"/>
<protein>
    <recommendedName>
        <fullName evidence="1">Large ribosomal subunit protein uL11</fullName>
    </recommendedName>
    <alternativeName>
        <fullName evidence="2">50S ribosomal protein L11</fullName>
    </alternativeName>
</protein>
<name>RL11_MANSM</name>
<feature type="chain" id="PRO_0000104312" description="Large ribosomal subunit protein uL11">
    <location>
        <begin position="1"/>
        <end position="142"/>
    </location>
</feature>
<dbReference type="EMBL" id="AE016827">
    <property type="protein sequence ID" value="AAU36814.1"/>
    <property type="molecule type" value="Genomic_DNA"/>
</dbReference>
<dbReference type="RefSeq" id="WP_011199389.1">
    <property type="nucleotide sequence ID" value="NC_006300.1"/>
</dbReference>
<dbReference type="SMR" id="Q65W46"/>
<dbReference type="STRING" id="221988.MS0207"/>
<dbReference type="KEGG" id="msu:MS0207"/>
<dbReference type="eggNOG" id="COG0080">
    <property type="taxonomic scope" value="Bacteria"/>
</dbReference>
<dbReference type="HOGENOM" id="CLU_074237_2_0_6"/>
<dbReference type="OrthoDB" id="9802408at2"/>
<dbReference type="Proteomes" id="UP000000607">
    <property type="component" value="Chromosome"/>
</dbReference>
<dbReference type="GO" id="GO:0022625">
    <property type="term" value="C:cytosolic large ribosomal subunit"/>
    <property type="evidence" value="ECO:0007669"/>
    <property type="project" value="TreeGrafter"/>
</dbReference>
<dbReference type="GO" id="GO:0070180">
    <property type="term" value="F:large ribosomal subunit rRNA binding"/>
    <property type="evidence" value="ECO:0007669"/>
    <property type="project" value="UniProtKB-UniRule"/>
</dbReference>
<dbReference type="GO" id="GO:0003735">
    <property type="term" value="F:structural constituent of ribosome"/>
    <property type="evidence" value="ECO:0007669"/>
    <property type="project" value="InterPro"/>
</dbReference>
<dbReference type="GO" id="GO:0006412">
    <property type="term" value="P:translation"/>
    <property type="evidence" value="ECO:0007669"/>
    <property type="project" value="UniProtKB-UniRule"/>
</dbReference>
<dbReference type="CDD" id="cd00349">
    <property type="entry name" value="Ribosomal_L11"/>
    <property type="match status" value="1"/>
</dbReference>
<dbReference type="FunFam" id="1.10.10.250:FF:000001">
    <property type="entry name" value="50S ribosomal protein L11"/>
    <property type="match status" value="1"/>
</dbReference>
<dbReference type="FunFam" id="3.30.1550.10:FF:000001">
    <property type="entry name" value="50S ribosomal protein L11"/>
    <property type="match status" value="1"/>
</dbReference>
<dbReference type="Gene3D" id="1.10.10.250">
    <property type="entry name" value="Ribosomal protein L11, C-terminal domain"/>
    <property type="match status" value="1"/>
</dbReference>
<dbReference type="Gene3D" id="3.30.1550.10">
    <property type="entry name" value="Ribosomal protein L11/L12, N-terminal domain"/>
    <property type="match status" value="1"/>
</dbReference>
<dbReference type="HAMAP" id="MF_00736">
    <property type="entry name" value="Ribosomal_uL11"/>
    <property type="match status" value="1"/>
</dbReference>
<dbReference type="InterPro" id="IPR000911">
    <property type="entry name" value="Ribosomal_uL11"/>
</dbReference>
<dbReference type="InterPro" id="IPR006519">
    <property type="entry name" value="Ribosomal_uL11_bac-typ"/>
</dbReference>
<dbReference type="InterPro" id="IPR020783">
    <property type="entry name" value="Ribosomal_uL11_C"/>
</dbReference>
<dbReference type="InterPro" id="IPR036769">
    <property type="entry name" value="Ribosomal_uL11_C_sf"/>
</dbReference>
<dbReference type="InterPro" id="IPR020784">
    <property type="entry name" value="Ribosomal_uL11_N"/>
</dbReference>
<dbReference type="InterPro" id="IPR036796">
    <property type="entry name" value="Ribosomal_uL11_N_sf"/>
</dbReference>
<dbReference type="NCBIfam" id="TIGR01632">
    <property type="entry name" value="L11_bact"/>
    <property type="match status" value="1"/>
</dbReference>
<dbReference type="PANTHER" id="PTHR11661">
    <property type="entry name" value="60S RIBOSOMAL PROTEIN L12"/>
    <property type="match status" value="1"/>
</dbReference>
<dbReference type="PANTHER" id="PTHR11661:SF1">
    <property type="entry name" value="LARGE RIBOSOMAL SUBUNIT PROTEIN UL11M"/>
    <property type="match status" value="1"/>
</dbReference>
<dbReference type="Pfam" id="PF00298">
    <property type="entry name" value="Ribosomal_L11"/>
    <property type="match status" value="1"/>
</dbReference>
<dbReference type="Pfam" id="PF03946">
    <property type="entry name" value="Ribosomal_L11_N"/>
    <property type="match status" value="1"/>
</dbReference>
<dbReference type="SMART" id="SM00649">
    <property type="entry name" value="RL11"/>
    <property type="match status" value="1"/>
</dbReference>
<dbReference type="SUPFAM" id="SSF54747">
    <property type="entry name" value="Ribosomal L11/L12e N-terminal domain"/>
    <property type="match status" value="1"/>
</dbReference>
<dbReference type="SUPFAM" id="SSF46906">
    <property type="entry name" value="Ribosomal protein L11, C-terminal domain"/>
    <property type="match status" value="1"/>
</dbReference>
<dbReference type="PROSITE" id="PS00359">
    <property type="entry name" value="RIBOSOMAL_L11"/>
    <property type="match status" value="1"/>
</dbReference>
<proteinExistence type="inferred from homology"/>
<accession>Q65W46</accession>
<reference key="1">
    <citation type="journal article" date="2004" name="Nat. Biotechnol.">
        <title>The genome sequence of the capnophilic rumen bacterium Mannheimia succiniciproducens.</title>
        <authorList>
            <person name="Hong S.H."/>
            <person name="Kim J.S."/>
            <person name="Lee S.Y."/>
            <person name="In Y.H."/>
            <person name="Choi S.S."/>
            <person name="Rih J.-K."/>
            <person name="Kim C.H."/>
            <person name="Jeong H."/>
            <person name="Hur C.G."/>
            <person name="Kim J.J."/>
        </authorList>
    </citation>
    <scope>NUCLEOTIDE SEQUENCE [LARGE SCALE GENOMIC DNA]</scope>
    <source>
        <strain>KCTC 0769BP / MBEL55E</strain>
    </source>
</reference>
<comment type="function">
    <text evidence="1">Forms part of the ribosomal stalk which helps the ribosome interact with GTP-bound translation factors.</text>
</comment>
<comment type="subunit">
    <text evidence="1">Part of the ribosomal stalk of the 50S ribosomal subunit. Interacts with L10 and the large rRNA to form the base of the stalk. L10 forms an elongated spine to which L12 dimers bind in a sequential fashion forming a multimeric L10(L12)X complex.</text>
</comment>
<comment type="PTM">
    <text evidence="1">One or more lysine residues are methylated.</text>
</comment>
<comment type="similarity">
    <text evidence="1">Belongs to the universal ribosomal protein uL11 family.</text>
</comment>
<gene>
    <name evidence="1" type="primary">rplK</name>
    <name type="ordered locus">MS0207</name>
</gene>
<sequence length="142" mass="14904">MAKKVQAYVKLQVAAGMANPSPPVGPALGQQGVNIMEFCKAFNARTESLEKGLPIPVVITVYADRSFTFVTKTPPAAVLLKKAAGVKSGSGKPNKEKVGKVTLDQVRQIAETKAADMTGATIETKMKSIAGTARSMGLVVEE</sequence>